<reference key="1">
    <citation type="submission" date="2007-03" db="EMBL/GenBank/DDBJ databases">
        <title>Sequencing analysis of Crucihimalaya wallichii chloroplast DNA.</title>
        <authorList>
            <person name="Hosouchi T."/>
            <person name="Tsuruoka H."/>
            <person name="Kotani H."/>
        </authorList>
    </citation>
    <scope>NUCLEOTIDE SEQUENCE [LARGE SCALE GENOMIC DNA]</scope>
</reference>
<geneLocation type="chloroplast"/>
<protein>
    <recommendedName>
        <fullName evidence="1">NAD(P)H-quinone oxidoreductase subunit K, chloroplastic</fullName>
        <ecNumber evidence="1">7.1.1.-</ecNumber>
    </recommendedName>
    <alternativeName>
        <fullName evidence="1">NAD(P)H dehydrogenase subunit K</fullName>
    </alternativeName>
    <alternativeName>
        <fullName evidence="1">NADH-plastoquinone oxidoreductase subunit K</fullName>
    </alternativeName>
</protein>
<evidence type="ECO:0000255" key="1">
    <source>
        <dbReference type="HAMAP-Rule" id="MF_01356"/>
    </source>
</evidence>
<keyword id="KW-0004">4Fe-4S</keyword>
<keyword id="KW-0150">Chloroplast</keyword>
<keyword id="KW-0408">Iron</keyword>
<keyword id="KW-0411">Iron-sulfur</keyword>
<keyword id="KW-0472">Membrane</keyword>
<keyword id="KW-0479">Metal-binding</keyword>
<keyword id="KW-0520">NAD</keyword>
<keyword id="KW-0521">NADP</keyword>
<keyword id="KW-0934">Plastid</keyword>
<keyword id="KW-0618">Plastoquinone</keyword>
<keyword id="KW-0874">Quinone</keyword>
<keyword id="KW-0793">Thylakoid</keyword>
<keyword id="KW-1278">Translocase</keyword>
<keyword id="KW-0813">Transport</keyword>
<comment type="function">
    <text evidence="1">NDH shuttles electrons from NAD(P)H:plastoquinone, via FMN and iron-sulfur (Fe-S) centers, to quinones in the photosynthetic chain and possibly in a chloroplast respiratory chain. The immediate electron acceptor for the enzyme in this species is believed to be plastoquinone. Couples the redox reaction to proton translocation, and thus conserves the redox energy in a proton gradient.</text>
</comment>
<comment type="catalytic activity">
    <reaction evidence="1">
        <text>a plastoquinone + NADH + (n+1) H(+)(in) = a plastoquinol + NAD(+) + n H(+)(out)</text>
        <dbReference type="Rhea" id="RHEA:42608"/>
        <dbReference type="Rhea" id="RHEA-COMP:9561"/>
        <dbReference type="Rhea" id="RHEA-COMP:9562"/>
        <dbReference type="ChEBI" id="CHEBI:15378"/>
        <dbReference type="ChEBI" id="CHEBI:17757"/>
        <dbReference type="ChEBI" id="CHEBI:57540"/>
        <dbReference type="ChEBI" id="CHEBI:57945"/>
        <dbReference type="ChEBI" id="CHEBI:62192"/>
    </reaction>
</comment>
<comment type="catalytic activity">
    <reaction evidence="1">
        <text>a plastoquinone + NADPH + (n+1) H(+)(in) = a plastoquinol + NADP(+) + n H(+)(out)</text>
        <dbReference type="Rhea" id="RHEA:42612"/>
        <dbReference type="Rhea" id="RHEA-COMP:9561"/>
        <dbReference type="Rhea" id="RHEA-COMP:9562"/>
        <dbReference type="ChEBI" id="CHEBI:15378"/>
        <dbReference type="ChEBI" id="CHEBI:17757"/>
        <dbReference type="ChEBI" id="CHEBI:57783"/>
        <dbReference type="ChEBI" id="CHEBI:58349"/>
        <dbReference type="ChEBI" id="CHEBI:62192"/>
    </reaction>
</comment>
<comment type="cofactor">
    <cofactor evidence="1">
        <name>[4Fe-4S] cluster</name>
        <dbReference type="ChEBI" id="CHEBI:49883"/>
    </cofactor>
    <text evidence="1">Binds 1 [4Fe-4S] cluster.</text>
</comment>
<comment type="subunit">
    <text evidence="1">NDH is composed of at least 16 different subunits, 5 of which are encoded in the nucleus.</text>
</comment>
<comment type="subcellular location">
    <subcellularLocation>
        <location evidence="1">Plastid</location>
        <location evidence="1">Chloroplast thylakoid membrane</location>
        <topology evidence="1">Peripheral membrane protein</topology>
        <orientation evidence="1">Stromal side</orientation>
    </subcellularLocation>
</comment>
<comment type="similarity">
    <text evidence="1">Belongs to the complex I 20 kDa subunit family.</text>
</comment>
<name>NDHK_CRUWA</name>
<proteinExistence type="inferred from homology"/>
<feature type="chain" id="PRO_0000358535" description="NAD(P)H-quinone oxidoreductase subunit K, chloroplastic">
    <location>
        <begin position="1"/>
        <end position="225"/>
    </location>
</feature>
<feature type="binding site" evidence="1">
    <location>
        <position position="43"/>
    </location>
    <ligand>
        <name>[4Fe-4S] cluster</name>
        <dbReference type="ChEBI" id="CHEBI:49883"/>
    </ligand>
</feature>
<feature type="binding site" evidence="1">
    <location>
        <position position="44"/>
    </location>
    <ligand>
        <name>[4Fe-4S] cluster</name>
        <dbReference type="ChEBI" id="CHEBI:49883"/>
    </ligand>
</feature>
<feature type="binding site" evidence="1">
    <location>
        <position position="108"/>
    </location>
    <ligand>
        <name>[4Fe-4S] cluster</name>
        <dbReference type="ChEBI" id="CHEBI:49883"/>
    </ligand>
</feature>
<feature type="binding site" evidence="1">
    <location>
        <position position="139"/>
    </location>
    <ligand>
        <name>[4Fe-4S] cluster</name>
        <dbReference type="ChEBI" id="CHEBI:49883"/>
    </ligand>
</feature>
<sequence>MNSIKFPVLDRTTKNSVISTTLNDLSNWSELSSLWPLLYGTSCCFIEFASLIGSRFDFDRYGLVPRSSPRQADLILTAGTVTMKMAPSLVRLYEQMPEPKYVIAMGACTITGGMFSTDSYSTVRGVDKLIPVDVYLPGCPPKPEAVIDAITKLRKKIAREIYKDRIRPQQGNRCFTTNHKFFVVRSPHTGNYDQELLYPPSSTSEISTETFFKYKSPVSSHELVN</sequence>
<accession>A4QKT5</accession>
<organism>
    <name type="scientific">Crucihimalaya wallichii</name>
    <name type="common">Rock-cress</name>
    <name type="synonym">Arabidopsis campestris</name>
    <dbReference type="NCBI Taxonomy" id="78192"/>
    <lineage>
        <taxon>Eukaryota</taxon>
        <taxon>Viridiplantae</taxon>
        <taxon>Streptophyta</taxon>
        <taxon>Embryophyta</taxon>
        <taxon>Tracheophyta</taxon>
        <taxon>Spermatophyta</taxon>
        <taxon>Magnoliopsida</taxon>
        <taxon>eudicotyledons</taxon>
        <taxon>Gunneridae</taxon>
        <taxon>Pentapetalae</taxon>
        <taxon>rosids</taxon>
        <taxon>malvids</taxon>
        <taxon>Brassicales</taxon>
        <taxon>Brassicaceae</taxon>
        <taxon>Crucihimalayeae</taxon>
        <taxon>Crucihimalaya</taxon>
    </lineage>
</organism>
<dbReference type="EC" id="7.1.1.-" evidence="1"/>
<dbReference type="EMBL" id="AP009372">
    <property type="protein sequence ID" value="BAF50290.1"/>
    <property type="molecule type" value="Genomic_DNA"/>
</dbReference>
<dbReference type="RefSeq" id="YP_001123466.1">
    <property type="nucleotide sequence ID" value="NC_009271.1"/>
</dbReference>
<dbReference type="SMR" id="A4QKT5"/>
<dbReference type="GeneID" id="4962675"/>
<dbReference type="GO" id="GO:0009535">
    <property type="term" value="C:chloroplast thylakoid membrane"/>
    <property type="evidence" value="ECO:0007669"/>
    <property type="project" value="UniProtKB-SubCell"/>
</dbReference>
<dbReference type="GO" id="GO:0045271">
    <property type="term" value="C:respiratory chain complex I"/>
    <property type="evidence" value="ECO:0007669"/>
    <property type="project" value="TreeGrafter"/>
</dbReference>
<dbReference type="GO" id="GO:0051539">
    <property type="term" value="F:4 iron, 4 sulfur cluster binding"/>
    <property type="evidence" value="ECO:0007669"/>
    <property type="project" value="UniProtKB-KW"/>
</dbReference>
<dbReference type="GO" id="GO:0005506">
    <property type="term" value="F:iron ion binding"/>
    <property type="evidence" value="ECO:0007669"/>
    <property type="project" value="UniProtKB-UniRule"/>
</dbReference>
<dbReference type="GO" id="GO:0008137">
    <property type="term" value="F:NADH dehydrogenase (ubiquinone) activity"/>
    <property type="evidence" value="ECO:0007669"/>
    <property type="project" value="InterPro"/>
</dbReference>
<dbReference type="GO" id="GO:0048038">
    <property type="term" value="F:quinone binding"/>
    <property type="evidence" value="ECO:0007669"/>
    <property type="project" value="UniProtKB-KW"/>
</dbReference>
<dbReference type="GO" id="GO:0009060">
    <property type="term" value="P:aerobic respiration"/>
    <property type="evidence" value="ECO:0007669"/>
    <property type="project" value="TreeGrafter"/>
</dbReference>
<dbReference type="GO" id="GO:0015990">
    <property type="term" value="P:electron transport coupled proton transport"/>
    <property type="evidence" value="ECO:0007669"/>
    <property type="project" value="TreeGrafter"/>
</dbReference>
<dbReference type="GO" id="GO:0019684">
    <property type="term" value="P:photosynthesis, light reaction"/>
    <property type="evidence" value="ECO:0007669"/>
    <property type="project" value="UniProtKB-UniRule"/>
</dbReference>
<dbReference type="FunFam" id="3.40.50.12280:FF:000003">
    <property type="entry name" value="NAD(P)H-quinone oxidoreductase subunit K, chloroplastic"/>
    <property type="match status" value="1"/>
</dbReference>
<dbReference type="Gene3D" id="3.40.50.12280">
    <property type="match status" value="1"/>
</dbReference>
<dbReference type="HAMAP" id="MF_01356">
    <property type="entry name" value="NDH1_NuoB"/>
    <property type="match status" value="1"/>
</dbReference>
<dbReference type="InterPro" id="IPR006137">
    <property type="entry name" value="NADH_UbQ_OxRdtase-like_20kDa"/>
</dbReference>
<dbReference type="InterPro" id="IPR006138">
    <property type="entry name" value="NADH_UQ_OxRdtase_20Kd_su"/>
</dbReference>
<dbReference type="NCBIfam" id="TIGR01957">
    <property type="entry name" value="nuoB_fam"/>
    <property type="match status" value="1"/>
</dbReference>
<dbReference type="NCBIfam" id="NF005012">
    <property type="entry name" value="PRK06411.1"/>
    <property type="match status" value="1"/>
</dbReference>
<dbReference type="PANTHER" id="PTHR11995">
    <property type="entry name" value="NADH DEHYDROGENASE"/>
    <property type="match status" value="1"/>
</dbReference>
<dbReference type="PANTHER" id="PTHR11995:SF14">
    <property type="entry name" value="NADH DEHYDROGENASE [UBIQUINONE] IRON-SULFUR PROTEIN 7, MITOCHONDRIAL"/>
    <property type="match status" value="1"/>
</dbReference>
<dbReference type="Pfam" id="PF01058">
    <property type="entry name" value="Oxidored_q6"/>
    <property type="match status" value="1"/>
</dbReference>
<dbReference type="SUPFAM" id="SSF56770">
    <property type="entry name" value="HydA/Nqo6-like"/>
    <property type="match status" value="1"/>
</dbReference>
<dbReference type="PROSITE" id="PS01150">
    <property type="entry name" value="COMPLEX1_20K"/>
    <property type="match status" value="1"/>
</dbReference>
<gene>
    <name evidence="1" type="primary">ndhK</name>
</gene>